<feature type="chain" id="PRO_1000020161" description="Methionyl-tRNA formyltransferase">
    <location>
        <begin position="1"/>
        <end position="318"/>
    </location>
</feature>
<feature type="binding site" evidence="1">
    <location>
        <begin position="112"/>
        <end position="115"/>
    </location>
    <ligand>
        <name>(6S)-5,6,7,8-tetrahydrofolate</name>
        <dbReference type="ChEBI" id="CHEBI:57453"/>
    </ligand>
</feature>
<reference key="1">
    <citation type="submission" date="2006-12" db="EMBL/GenBank/DDBJ databases">
        <title>Complete sequence of Shewanella sp. W3-18-1.</title>
        <authorList>
            <consortium name="US DOE Joint Genome Institute"/>
            <person name="Copeland A."/>
            <person name="Lucas S."/>
            <person name="Lapidus A."/>
            <person name="Barry K."/>
            <person name="Detter J.C."/>
            <person name="Glavina del Rio T."/>
            <person name="Hammon N."/>
            <person name="Israni S."/>
            <person name="Dalin E."/>
            <person name="Tice H."/>
            <person name="Pitluck S."/>
            <person name="Chain P."/>
            <person name="Malfatti S."/>
            <person name="Shin M."/>
            <person name="Vergez L."/>
            <person name="Schmutz J."/>
            <person name="Larimer F."/>
            <person name="Land M."/>
            <person name="Hauser L."/>
            <person name="Kyrpides N."/>
            <person name="Lykidis A."/>
            <person name="Tiedje J."/>
            <person name="Richardson P."/>
        </authorList>
    </citation>
    <scope>NUCLEOTIDE SEQUENCE [LARGE SCALE GENOMIC DNA]</scope>
    <source>
        <strain>W3-18-1</strain>
    </source>
</reference>
<proteinExistence type="inferred from homology"/>
<sequence>MKSLNIIFAGTPDFAARHLQALLNSQHNVIGVYTQPDRPAGRGKKLTASPVKELAVANNIPVYQPGSLRKEPAQQALAALNADIMVVVAYGLILPKVVLDTPRLGCINVHGSILPRWRGAAPIQRALWAGDKETGVTVMQMDVGLDTGDMLLKTYLPIEDSDTSASLYEKLAEQGPVALLQALKGLANGTLAAEKQDEALANYAEKLSKEEARLDWNKSAKQLWQEVRAFNPWPVSYFEHQGNTIKVWQAHVSETISTAAPGTIISASKRGIEVATADGVLTLLSMQLPGKKPLNVADILNARGEWFSPNTRLANEAE</sequence>
<evidence type="ECO:0000255" key="1">
    <source>
        <dbReference type="HAMAP-Rule" id="MF_00182"/>
    </source>
</evidence>
<name>FMT_SHESW</name>
<organism>
    <name type="scientific">Shewanella sp. (strain W3-18-1)</name>
    <dbReference type="NCBI Taxonomy" id="351745"/>
    <lineage>
        <taxon>Bacteria</taxon>
        <taxon>Pseudomonadati</taxon>
        <taxon>Pseudomonadota</taxon>
        <taxon>Gammaproteobacteria</taxon>
        <taxon>Alteromonadales</taxon>
        <taxon>Shewanellaceae</taxon>
        <taxon>Shewanella</taxon>
    </lineage>
</organism>
<comment type="function">
    <text evidence="1">Attaches a formyl group to the free amino group of methionyl-tRNA(fMet). The formyl group appears to play a dual role in the initiator identity of N-formylmethionyl-tRNA by promoting its recognition by IF2 and preventing the misappropriation of this tRNA by the elongation apparatus.</text>
</comment>
<comment type="catalytic activity">
    <reaction evidence="1">
        <text>L-methionyl-tRNA(fMet) + (6R)-10-formyltetrahydrofolate = N-formyl-L-methionyl-tRNA(fMet) + (6S)-5,6,7,8-tetrahydrofolate + H(+)</text>
        <dbReference type="Rhea" id="RHEA:24380"/>
        <dbReference type="Rhea" id="RHEA-COMP:9952"/>
        <dbReference type="Rhea" id="RHEA-COMP:9953"/>
        <dbReference type="ChEBI" id="CHEBI:15378"/>
        <dbReference type="ChEBI" id="CHEBI:57453"/>
        <dbReference type="ChEBI" id="CHEBI:78530"/>
        <dbReference type="ChEBI" id="CHEBI:78844"/>
        <dbReference type="ChEBI" id="CHEBI:195366"/>
        <dbReference type="EC" id="2.1.2.9"/>
    </reaction>
</comment>
<comment type="similarity">
    <text evidence="1">Belongs to the Fmt family.</text>
</comment>
<protein>
    <recommendedName>
        <fullName evidence="1">Methionyl-tRNA formyltransferase</fullName>
        <ecNumber evidence="1">2.1.2.9</ecNumber>
    </recommendedName>
</protein>
<dbReference type="EC" id="2.1.2.9" evidence="1"/>
<dbReference type="EMBL" id="CP000503">
    <property type="protein sequence ID" value="ABM22876.1"/>
    <property type="molecule type" value="Genomic_DNA"/>
</dbReference>
<dbReference type="RefSeq" id="WP_011787445.1">
    <property type="nucleotide sequence ID" value="NC_008750.1"/>
</dbReference>
<dbReference type="SMR" id="A1RDX6"/>
<dbReference type="GeneID" id="67441615"/>
<dbReference type="KEGG" id="shw:Sputw3181_0023"/>
<dbReference type="HOGENOM" id="CLU_033347_1_2_6"/>
<dbReference type="Proteomes" id="UP000002597">
    <property type="component" value="Chromosome"/>
</dbReference>
<dbReference type="GO" id="GO:0005829">
    <property type="term" value="C:cytosol"/>
    <property type="evidence" value="ECO:0007669"/>
    <property type="project" value="TreeGrafter"/>
</dbReference>
<dbReference type="GO" id="GO:0004479">
    <property type="term" value="F:methionyl-tRNA formyltransferase activity"/>
    <property type="evidence" value="ECO:0007669"/>
    <property type="project" value="UniProtKB-UniRule"/>
</dbReference>
<dbReference type="CDD" id="cd08646">
    <property type="entry name" value="FMT_core_Met-tRNA-FMT_N"/>
    <property type="match status" value="1"/>
</dbReference>
<dbReference type="CDD" id="cd08704">
    <property type="entry name" value="Met_tRNA_FMT_C"/>
    <property type="match status" value="1"/>
</dbReference>
<dbReference type="FunFam" id="3.40.50.170:FF:000003">
    <property type="entry name" value="Methionyl-tRNA formyltransferase"/>
    <property type="match status" value="1"/>
</dbReference>
<dbReference type="Gene3D" id="3.10.25.10">
    <property type="entry name" value="Formyl transferase, C-terminal domain"/>
    <property type="match status" value="1"/>
</dbReference>
<dbReference type="Gene3D" id="3.40.50.170">
    <property type="entry name" value="Formyl transferase, N-terminal domain"/>
    <property type="match status" value="1"/>
</dbReference>
<dbReference type="HAMAP" id="MF_00182">
    <property type="entry name" value="Formyl_trans"/>
    <property type="match status" value="1"/>
</dbReference>
<dbReference type="InterPro" id="IPR005794">
    <property type="entry name" value="Fmt"/>
</dbReference>
<dbReference type="InterPro" id="IPR005793">
    <property type="entry name" value="Formyl_trans_C"/>
</dbReference>
<dbReference type="InterPro" id="IPR037022">
    <property type="entry name" value="Formyl_trans_C_sf"/>
</dbReference>
<dbReference type="InterPro" id="IPR002376">
    <property type="entry name" value="Formyl_transf_N"/>
</dbReference>
<dbReference type="InterPro" id="IPR036477">
    <property type="entry name" value="Formyl_transf_N_sf"/>
</dbReference>
<dbReference type="InterPro" id="IPR011034">
    <property type="entry name" value="Formyl_transferase-like_C_sf"/>
</dbReference>
<dbReference type="InterPro" id="IPR001555">
    <property type="entry name" value="GART_AS"/>
</dbReference>
<dbReference type="InterPro" id="IPR044135">
    <property type="entry name" value="Met-tRNA-FMT_C"/>
</dbReference>
<dbReference type="InterPro" id="IPR041711">
    <property type="entry name" value="Met-tRNA-FMT_N"/>
</dbReference>
<dbReference type="NCBIfam" id="TIGR00460">
    <property type="entry name" value="fmt"/>
    <property type="match status" value="1"/>
</dbReference>
<dbReference type="PANTHER" id="PTHR11138">
    <property type="entry name" value="METHIONYL-TRNA FORMYLTRANSFERASE"/>
    <property type="match status" value="1"/>
</dbReference>
<dbReference type="PANTHER" id="PTHR11138:SF5">
    <property type="entry name" value="METHIONYL-TRNA FORMYLTRANSFERASE, MITOCHONDRIAL"/>
    <property type="match status" value="1"/>
</dbReference>
<dbReference type="Pfam" id="PF02911">
    <property type="entry name" value="Formyl_trans_C"/>
    <property type="match status" value="1"/>
</dbReference>
<dbReference type="Pfam" id="PF00551">
    <property type="entry name" value="Formyl_trans_N"/>
    <property type="match status" value="1"/>
</dbReference>
<dbReference type="SUPFAM" id="SSF50486">
    <property type="entry name" value="FMT C-terminal domain-like"/>
    <property type="match status" value="1"/>
</dbReference>
<dbReference type="SUPFAM" id="SSF53328">
    <property type="entry name" value="Formyltransferase"/>
    <property type="match status" value="1"/>
</dbReference>
<dbReference type="PROSITE" id="PS00373">
    <property type="entry name" value="GART"/>
    <property type="match status" value="1"/>
</dbReference>
<keyword id="KW-0648">Protein biosynthesis</keyword>
<keyword id="KW-0808">Transferase</keyword>
<accession>A1RDX6</accession>
<gene>
    <name evidence="1" type="primary">fmt</name>
    <name type="ordered locus">Sputw3181_0023</name>
</gene>